<sequence>MNRPSGRAADQLRPIRITRHYTKHAEGSVLVEFGDTKVICTVSAESGVPRFLKGQGQGWLTAEYGMLPRSTGERNQREASRGKQGGRTLEIQRLIGRSLRAALDLSKLGENTLYIDCDVIQADGGTRTASITGATVALIDALAVLKKRGALKGNPLKQMVAAVSVGIYQGVPVLDLDYLEDSAAETDLNVVMTDAGGFIEVQGTAEGAPFRPAELNAMLELAQQGMQELFELQRAALAE</sequence>
<feature type="chain" id="PRO_1000129359" description="Ribonuclease PH">
    <location>
        <begin position="1"/>
        <end position="239"/>
    </location>
</feature>
<feature type="binding site" evidence="1">
    <location>
        <position position="87"/>
    </location>
    <ligand>
        <name>phosphate</name>
        <dbReference type="ChEBI" id="CHEBI:43474"/>
        <note>substrate</note>
    </ligand>
</feature>
<feature type="binding site" evidence="1">
    <location>
        <begin position="125"/>
        <end position="127"/>
    </location>
    <ligand>
        <name>phosphate</name>
        <dbReference type="ChEBI" id="CHEBI:43474"/>
        <note>substrate</note>
    </ligand>
</feature>
<keyword id="KW-0548">Nucleotidyltransferase</keyword>
<keyword id="KW-0694">RNA-binding</keyword>
<keyword id="KW-0698">rRNA processing</keyword>
<keyword id="KW-0808">Transferase</keyword>
<keyword id="KW-0819">tRNA processing</keyword>
<keyword id="KW-0820">tRNA-binding</keyword>
<reference key="1">
    <citation type="journal article" date="2009" name="Genome Res.">
        <title>Newly introduced genomic prophage islands are critical determinants of in vivo competitiveness in the Liverpool epidemic strain of Pseudomonas aeruginosa.</title>
        <authorList>
            <person name="Winstanley C."/>
            <person name="Langille M.G.I."/>
            <person name="Fothergill J.L."/>
            <person name="Kukavica-Ibrulj I."/>
            <person name="Paradis-Bleau C."/>
            <person name="Sanschagrin F."/>
            <person name="Thomson N.R."/>
            <person name="Winsor G.L."/>
            <person name="Quail M.A."/>
            <person name="Lennard N."/>
            <person name="Bignell A."/>
            <person name="Clarke L."/>
            <person name="Seeger K."/>
            <person name="Saunders D."/>
            <person name="Harris D."/>
            <person name="Parkhill J."/>
            <person name="Hancock R.E.W."/>
            <person name="Brinkman F.S.L."/>
            <person name="Levesque R.C."/>
        </authorList>
    </citation>
    <scope>NUCLEOTIDE SEQUENCE [LARGE SCALE GENOMIC DNA]</scope>
    <source>
        <strain>LESB58</strain>
    </source>
</reference>
<comment type="function">
    <text evidence="1">Phosphorolytic 3'-5' exoribonuclease that plays an important role in tRNA 3'-end maturation. Removes nucleotide residues following the 3'-CCA terminus of tRNAs; can also add nucleotides to the ends of RNA molecules by using nucleoside diphosphates as substrates, but this may not be physiologically important. Probably plays a role in initiation of 16S rRNA degradation (leading to ribosome degradation) during starvation.</text>
</comment>
<comment type="catalytic activity">
    <reaction evidence="1">
        <text>tRNA(n+1) + phosphate = tRNA(n) + a ribonucleoside 5'-diphosphate</text>
        <dbReference type="Rhea" id="RHEA:10628"/>
        <dbReference type="Rhea" id="RHEA-COMP:17343"/>
        <dbReference type="Rhea" id="RHEA-COMP:17344"/>
        <dbReference type="ChEBI" id="CHEBI:43474"/>
        <dbReference type="ChEBI" id="CHEBI:57930"/>
        <dbReference type="ChEBI" id="CHEBI:173114"/>
        <dbReference type="EC" id="2.7.7.56"/>
    </reaction>
</comment>
<comment type="subunit">
    <text evidence="1">Homohexameric ring arranged as a trimer of dimers.</text>
</comment>
<comment type="similarity">
    <text evidence="1">Belongs to the RNase PH family.</text>
</comment>
<proteinExistence type="inferred from homology"/>
<evidence type="ECO:0000255" key="1">
    <source>
        <dbReference type="HAMAP-Rule" id="MF_00564"/>
    </source>
</evidence>
<organism>
    <name type="scientific">Pseudomonas aeruginosa (strain LESB58)</name>
    <dbReference type="NCBI Taxonomy" id="557722"/>
    <lineage>
        <taxon>Bacteria</taxon>
        <taxon>Pseudomonadati</taxon>
        <taxon>Pseudomonadota</taxon>
        <taxon>Gammaproteobacteria</taxon>
        <taxon>Pseudomonadales</taxon>
        <taxon>Pseudomonadaceae</taxon>
        <taxon>Pseudomonas</taxon>
    </lineage>
</organism>
<gene>
    <name evidence="1" type="primary">rph</name>
    <name type="ordered locus">PLES_57291</name>
</gene>
<dbReference type="EC" id="2.7.7.56" evidence="1"/>
<dbReference type="EMBL" id="FM209186">
    <property type="protein sequence ID" value="CAW30483.1"/>
    <property type="molecule type" value="Genomic_DNA"/>
</dbReference>
<dbReference type="RefSeq" id="WP_003096595.1">
    <property type="nucleotide sequence ID" value="NC_011770.1"/>
</dbReference>
<dbReference type="SMR" id="B7V5M5"/>
<dbReference type="GeneID" id="77223865"/>
<dbReference type="KEGG" id="pag:PLES_57291"/>
<dbReference type="HOGENOM" id="CLU_050858_0_0_6"/>
<dbReference type="GO" id="GO:0000175">
    <property type="term" value="F:3'-5'-RNA exonuclease activity"/>
    <property type="evidence" value="ECO:0007669"/>
    <property type="project" value="UniProtKB-UniRule"/>
</dbReference>
<dbReference type="GO" id="GO:0000049">
    <property type="term" value="F:tRNA binding"/>
    <property type="evidence" value="ECO:0007669"/>
    <property type="project" value="UniProtKB-UniRule"/>
</dbReference>
<dbReference type="GO" id="GO:0009022">
    <property type="term" value="F:tRNA nucleotidyltransferase activity"/>
    <property type="evidence" value="ECO:0007669"/>
    <property type="project" value="UniProtKB-UniRule"/>
</dbReference>
<dbReference type="GO" id="GO:0016075">
    <property type="term" value="P:rRNA catabolic process"/>
    <property type="evidence" value="ECO:0007669"/>
    <property type="project" value="UniProtKB-UniRule"/>
</dbReference>
<dbReference type="GO" id="GO:0006364">
    <property type="term" value="P:rRNA processing"/>
    <property type="evidence" value="ECO:0007669"/>
    <property type="project" value="UniProtKB-KW"/>
</dbReference>
<dbReference type="GO" id="GO:0008033">
    <property type="term" value="P:tRNA processing"/>
    <property type="evidence" value="ECO:0007669"/>
    <property type="project" value="UniProtKB-UniRule"/>
</dbReference>
<dbReference type="CDD" id="cd11362">
    <property type="entry name" value="RNase_PH_bact"/>
    <property type="match status" value="1"/>
</dbReference>
<dbReference type="FunFam" id="3.30.230.70:FF:000003">
    <property type="entry name" value="Ribonuclease PH"/>
    <property type="match status" value="1"/>
</dbReference>
<dbReference type="Gene3D" id="3.30.230.70">
    <property type="entry name" value="GHMP Kinase, N-terminal domain"/>
    <property type="match status" value="1"/>
</dbReference>
<dbReference type="HAMAP" id="MF_00564">
    <property type="entry name" value="RNase_PH"/>
    <property type="match status" value="1"/>
</dbReference>
<dbReference type="InterPro" id="IPR001247">
    <property type="entry name" value="ExoRNase_PH_dom1"/>
</dbReference>
<dbReference type="InterPro" id="IPR015847">
    <property type="entry name" value="ExoRNase_PH_dom2"/>
</dbReference>
<dbReference type="InterPro" id="IPR036345">
    <property type="entry name" value="ExoRNase_PH_dom2_sf"/>
</dbReference>
<dbReference type="InterPro" id="IPR027408">
    <property type="entry name" value="PNPase/RNase_PH_dom_sf"/>
</dbReference>
<dbReference type="InterPro" id="IPR020568">
    <property type="entry name" value="Ribosomal_Su5_D2-typ_SF"/>
</dbReference>
<dbReference type="InterPro" id="IPR050080">
    <property type="entry name" value="RNase_PH"/>
</dbReference>
<dbReference type="InterPro" id="IPR002381">
    <property type="entry name" value="RNase_PH_bac-type"/>
</dbReference>
<dbReference type="InterPro" id="IPR018336">
    <property type="entry name" value="RNase_PH_CS"/>
</dbReference>
<dbReference type="NCBIfam" id="TIGR01966">
    <property type="entry name" value="RNasePH"/>
    <property type="match status" value="1"/>
</dbReference>
<dbReference type="PANTHER" id="PTHR11953">
    <property type="entry name" value="EXOSOME COMPLEX COMPONENT"/>
    <property type="match status" value="1"/>
</dbReference>
<dbReference type="PANTHER" id="PTHR11953:SF0">
    <property type="entry name" value="EXOSOME COMPLEX COMPONENT RRP41"/>
    <property type="match status" value="1"/>
</dbReference>
<dbReference type="Pfam" id="PF01138">
    <property type="entry name" value="RNase_PH"/>
    <property type="match status" value="1"/>
</dbReference>
<dbReference type="Pfam" id="PF03725">
    <property type="entry name" value="RNase_PH_C"/>
    <property type="match status" value="1"/>
</dbReference>
<dbReference type="SUPFAM" id="SSF55666">
    <property type="entry name" value="Ribonuclease PH domain 2-like"/>
    <property type="match status" value="1"/>
</dbReference>
<dbReference type="SUPFAM" id="SSF54211">
    <property type="entry name" value="Ribosomal protein S5 domain 2-like"/>
    <property type="match status" value="1"/>
</dbReference>
<dbReference type="PROSITE" id="PS01277">
    <property type="entry name" value="RIBONUCLEASE_PH"/>
    <property type="match status" value="1"/>
</dbReference>
<protein>
    <recommendedName>
        <fullName evidence="1">Ribonuclease PH</fullName>
        <shortName evidence="1">RNase PH</shortName>
        <ecNumber evidence="1">2.7.7.56</ecNumber>
    </recommendedName>
    <alternativeName>
        <fullName evidence="1">tRNA nucleotidyltransferase</fullName>
    </alternativeName>
</protein>
<name>RNPH_PSEA8</name>
<accession>B7V5M5</accession>